<gene>
    <name type="primary">MT-ND5</name>
    <name type="synonym">MTND5</name>
    <name type="synonym">NADH5</name>
    <name type="synonym">ND5</name>
</gene>
<name>NU5M_SALSA</name>
<feature type="chain" id="PRO_0000118146" description="NADH-ubiquinone oxidoreductase chain 5">
    <location>
        <begin position="1"/>
        <end position="612"/>
    </location>
</feature>
<feature type="transmembrane region" description="Helical" evidence="2">
    <location>
        <begin position="4"/>
        <end position="24"/>
    </location>
</feature>
<feature type="transmembrane region" description="Helical" evidence="2">
    <location>
        <begin position="48"/>
        <end position="68"/>
    </location>
</feature>
<feature type="transmembrane region" description="Helical" evidence="2">
    <location>
        <begin position="92"/>
        <end position="112"/>
    </location>
</feature>
<feature type="transmembrane region" description="Helical" evidence="2">
    <location>
        <begin position="122"/>
        <end position="142"/>
    </location>
</feature>
<feature type="transmembrane region" description="Helical" evidence="2">
    <location>
        <begin position="145"/>
        <end position="165"/>
    </location>
</feature>
<feature type="transmembrane region" description="Helical" evidence="2">
    <location>
        <begin position="176"/>
        <end position="196"/>
    </location>
</feature>
<feature type="transmembrane region" description="Helical" evidence="2">
    <location>
        <begin position="215"/>
        <end position="235"/>
    </location>
</feature>
<feature type="transmembrane region" description="Helical" evidence="2">
    <location>
        <begin position="247"/>
        <end position="267"/>
    </location>
</feature>
<feature type="transmembrane region" description="Helical" evidence="2">
    <location>
        <begin position="279"/>
        <end position="299"/>
    </location>
</feature>
<feature type="transmembrane region" description="Helical" evidence="2">
    <location>
        <begin position="307"/>
        <end position="327"/>
    </location>
</feature>
<feature type="transmembrane region" description="Helical" evidence="2">
    <location>
        <begin position="330"/>
        <end position="350"/>
    </location>
</feature>
<feature type="transmembrane region" description="Helical" evidence="2">
    <location>
        <begin position="376"/>
        <end position="396"/>
    </location>
</feature>
<feature type="transmembrane region" description="Helical" evidence="2">
    <location>
        <begin position="410"/>
        <end position="430"/>
    </location>
</feature>
<feature type="transmembrane region" description="Helical" evidence="2">
    <location>
        <begin position="463"/>
        <end position="483"/>
    </location>
</feature>
<feature type="transmembrane region" description="Helical" evidence="2">
    <location>
        <begin position="494"/>
        <end position="514"/>
    </location>
</feature>
<feature type="transmembrane region" description="Helical" evidence="2">
    <location>
        <begin position="591"/>
        <end position="611"/>
    </location>
</feature>
<feature type="sequence conflict" description="In Ref. 2; AAF61388." evidence="3" ref="2">
    <original>V</original>
    <variation>M</variation>
    <location>
        <position position="177"/>
    </location>
</feature>
<dbReference type="EC" id="7.1.1.2"/>
<dbReference type="EMBL" id="U12143">
    <property type="protein sequence ID" value="AAD04743.1"/>
    <property type="molecule type" value="Genomic_DNA"/>
</dbReference>
<dbReference type="EMBL" id="AF133701">
    <property type="protein sequence ID" value="AAF61388.1"/>
    <property type="molecule type" value="Genomic_DNA"/>
</dbReference>
<dbReference type="PIR" id="T09957">
    <property type="entry name" value="T09957"/>
</dbReference>
<dbReference type="RefSeq" id="NP_008455.1">
    <property type="nucleotide sequence ID" value="NC_001960.1"/>
</dbReference>
<dbReference type="SMR" id="Q9ZZM3"/>
<dbReference type="STRING" id="8030.ENSSSAP00000000012"/>
<dbReference type="PaxDb" id="8030-ENSSSAP00000000012"/>
<dbReference type="GeneID" id="808309"/>
<dbReference type="KEGG" id="sasa:808309"/>
<dbReference type="CTD" id="4540"/>
<dbReference type="Proteomes" id="UP000087266">
    <property type="component" value="Mitochondrion MT"/>
</dbReference>
<dbReference type="Bgee" id="ENSSSAG00000000033">
    <property type="expression patterns" value="Expressed in mesonephros and 25 other cell types or tissues"/>
</dbReference>
<dbReference type="GO" id="GO:0005743">
    <property type="term" value="C:mitochondrial inner membrane"/>
    <property type="evidence" value="ECO:0007669"/>
    <property type="project" value="UniProtKB-SubCell"/>
</dbReference>
<dbReference type="GO" id="GO:0008137">
    <property type="term" value="F:NADH dehydrogenase (ubiquinone) activity"/>
    <property type="evidence" value="ECO:0007669"/>
    <property type="project" value="UniProtKB-EC"/>
</dbReference>
<dbReference type="GO" id="GO:0042773">
    <property type="term" value="P:ATP synthesis coupled electron transport"/>
    <property type="evidence" value="ECO:0007669"/>
    <property type="project" value="InterPro"/>
</dbReference>
<dbReference type="GO" id="GO:0015990">
    <property type="term" value="P:electron transport coupled proton transport"/>
    <property type="evidence" value="ECO:0007669"/>
    <property type="project" value="TreeGrafter"/>
</dbReference>
<dbReference type="InterPro" id="IPR010934">
    <property type="entry name" value="NADH_DH_su5_C"/>
</dbReference>
<dbReference type="InterPro" id="IPR018393">
    <property type="entry name" value="NADHpl_OxRdtase_5_subgr"/>
</dbReference>
<dbReference type="InterPro" id="IPR001750">
    <property type="entry name" value="ND/Mrp_TM"/>
</dbReference>
<dbReference type="InterPro" id="IPR003945">
    <property type="entry name" value="NU5C-like"/>
</dbReference>
<dbReference type="InterPro" id="IPR001516">
    <property type="entry name" value="Proton_antipo_N"/>
</dbReference>
<dbReference type="NCBIfam" id="TIGR01974">
    <property type="entry name" value="NDH_I_L"/>
    <property type="match status" value="1"/>
</dbReference>
<dbReference type="PANTHER" id="PTHR42829">
    <property type="entry name" value="NADH-UBIQUINONE OXIDOREDUCTASE CHAIN 5"/>
    <property type="match status" value="1"/>
</dbReference>
<dbReference type="PANTHER" id="PTHR42829:SF2">
    <property type="entry name" value="NADH-UBIQUINONE OXIDOREDUCTASE CHAIN 5"/>
    <property type="match status" value="1"/>
</dbReference>
<dbReference type="Pfam" id="PF06455">
    <property type="entry name" value="NADH5_C"/>
    <property type="match status" value="1"/>
</dbReference>
<dbReference type="Pfam" id="PF00361">
    <property type="entry name" value="Proton_antipo_M"/>
    <property type="match status" value="1"/>
</dbReference>
<dbReference type="Pfam" id="PF00662">
    <property type="entry name" value="Proton_antipo_N"/>
    <property type="match status" value="1"/>
</dbReference>
<dbReference type="PRINTS" id="PR01434">
    <property type="entry name" value="NADHDHGNASE5"/>
</dbReference>
<evidence type="ECO:0000250" key="1"/>
<evidence type="ECO:0000255" key="2"/>
<evidence type="ECO:0000305" key="3"/>
<protein>
    <recommendedName>
        <fullName>NADH-ubiquinone oxidoreductase chain 5</fullName>
        <ecNumber>7.1.1.2</ecNumber>
    </recommendedName>
    <alternativeName>
        <fullName>NADH dehydrogenase subunit 5</fullName>
    </alternativeName>
</protein>
<geneLocation type="mitochondrion"/>
<accession>Q9ZZM3</accession>
<accession>Q9MPG6</accession>
<sequence>MHPTTLILSSTLLMIFALLLYPLITTLNPTPQQENWALTHVKTAIKMAFLVSLLPLFIFLDQGTETIVTNWQWMNTTTFDINLSFKFDHYSIIFTPIALYVTWSILEFASWYMHADPNMNRFFKYLLLFLIAMIILVTANNMFQLFIGWEGVGIMSFLLIGWWYGRADANTAAMQAVIYNRVGDIGLILSMAWFATNLNSWEIQQMFASSKELDLTLPLMGLILAATGKSAQFGLHPWLPSAMEGPTPVSALLHSSTMVVAGIFLLIRLHPLMENNQTALTTCLCLGALTTLFTATCALTQNDIKKIVAFSTSSQLGLMMVTIGLNQPQLAFLHICTHAFFKAMLFLCSGSIIHSLNDEQDIRKMGGMHNLTPFTSSCLTIGSLALTGTPFLAGFFSKDAIIEALNTSHLNAWALTLTLLATSFTAVYSLRVVFFVSMGHPRFTATAPINENNPSVINPIKRLAWGSIIAGLLITSNFLPSKTPIMTMPLPLKLAALLVTISGLLIALELASLTNKQFKTTPNLITHNFSNMLGFFPAIIHRLAPKLNLTLGQTIASQMVDQTWFEKIGPKGVVSTHLPMVTTTSNIQQGMIKTYLTLFFLSTALAVLLTLT</sequence>
<organism>
    <name type="scientific">Salmo salar</name>
    <name type="common">Atlantic salmon</name>
    <dbReference type="NCBI Taxonomy" id="8030"/>
    <lineage>
        <taxon>Eukaryota</taxon>
        <taxon>Metazoa</taxon>
        <taxon>Chordata</taxon>
        <taxon>Craniata</taxon>
        <taxon>Vertebrata</taxon>
        <taxon>Euteleostomi</taxon>
        <taxon>Actinopterygii</taxon>
        <taxon>Neopterygii</taxon>
        <taxon>Teleostei</taxon>
        <taxon>Protacanthopterygii</taxon>
        <taxon>Salmoniformes</taxon>
        <taxon>Salmonidae</taxon>
        <taxon>Salmoninae</taxon>
        <taxon>Salmo</taxon>
    </lineage>
</organism>
<reference key="1">
    <citation type="journal article" date="1999" name="Gene">
        <title>The complete mitochondrial DNA sequence of the Atlantic salmon, Salmo salar.</title>
        <authorList>
            <person name="Hurst C.D."/>
            <person name="Bartlett S.E."/>
            <person name="Davidson W.S."/>
            <person name="Bruce I.J."/>
        </authorList>
    </citation>
    <scope>NUCLEOTIDE SEQUENCE [GENOMIC DNA]</scope>
    <source>
        <tissue>Liver</tissue>
    </source>
</reference>
<reference key="2">
    <citation type="submission" date="1999-03" db="EMBL/GenBank/DDBJ databases">
        <title>The complete mitochondrial genome sequence of a teleost, Salmo salar, and comparisons with other salmoniformes.</title>
        <authorList>
            <person name="Arnason U."/>
            <person name="Johnsson E."/>
            <person name="Rasmussen A.S."/>
        </authorList>
    </citation>
    <scope>NUCLEOTIDE SEQUENCE [GENOMIC DNA]</scope>
</reference>
<comment type="function">
    <text evidence="1">Core subunit of the mitochondrial membrane respiratory chain NADH dehydrogenase (Complex I) that is believed to belong to the minimal assembly required for catalysis. Complex I functions in the transfer of electrons from NADH to the respiratory chain. The immediate electron acceptor for the enzyme is believed to be ubiquinone (By similarity).</text>
</comment>
<comment type="catalytic activity">
    <reaction>
        <text>a ubiquinone + NADH + 5 H(+)(in) = a ubiquinol + NAD(+) + 4 H(+)(out)</text>
        <dbReference type="Rhea" id="RHEA:29091"/>
        <dbReference type="Rhea" id="RHEA-COMP:9565"/>
        <dbReference type="Rhea" id="RHEA-COMP:9566"/>
        <dbReference type="ChEBI" id="CHEBI:15378"/>
        <dbReference type="ChEBI" id="CHEBI:16389"/>
        <dbReference type="ChEBI" id="CHEBI:17976"/>
        <dbReference type="ChEBI" id="CHEBI:57540"/>
        <dbReference type="ChEBI" id="CHEBI:57945"/>
        <dbReference type="EC" id="7.1.1.2"/>
    </reaction>
</comment>
<comment type="subcellular location">
    <subcellularLocation>
        <location evidence="1">Mitochondrion inner membrane</location>
        <topology evidence="1">Multi-pass membrane protein</topology>
    </subcellularLocation>
</comment>
<comment type="similarity">
    <text evidence="3">Belongs to the complex I subunit 5 family.</text>
</comment>
<keyword id="KW-0249">Electron transport</keyword>
<keyword id="KW-0472">Membrane</keyword>
<keyword id="KW-0496">Mitochondrion</keyword>
<keyword id="KW-0999">Mitochondrion inner membrane</keyword>
<keyword id="KW-0520">NAD</keyword>
<keyword id="KW-1185">Reference proteome</keyword>
<keyword id="KW-0679">Respiratory chain</keyword>
<keyword id="KW-1278">Translocase</keyword>
<keyword id="KW-0812">Transmembrane</keyword>
<keyword id="KW-1133">Transmembrane helix</keyword>
<keyword id="KW-0813">Transport</keyword>
<keyword id="KW-0830">Ubiquinone</keyword>
<proteinExistence type="inferred from homology"/>